<protein>
    <recommendedName>
        <fullName evidence="1">Peptide chain release factor 3</fullName>
        <shortName evidence="1">RF-3</shortName>
    </recommendedName>
</protein>
<reference key="1">
    <citation type="journal article" date="2003" name="Genome Res.">
        <title>Genome sequence of an M3 strain of Streptococcus pyogenes reveals a large-scale genomic rearrangement in invasive strains and new insights into phage evolution.</title>
        <authorList>
            <person name="Nakagawa I."/>
            <person name="Kurokawa K."/>
            <person name="Yamashita A."/>
            <person name="Nakata M."/>
            <person name="Tomiyasu Y."/>
            <person name="Okahashi N."/>
            <person name="Kawabata S."/>
            <person name="Yamazaki K."/>
            <person name="Shiba T."/>
            <person name="Yasunaga T."/>
            <person name="Hayashi H."/>
            <person name="Hattori M."/>
            <person name="Hamada S."/>
        </authorList>
    </citation>
    <scope>NUCLEOTIDE SEQUENCE [LARGE SCALE GENOMIC DNA]</scope>
    <source>
        <strain>SSI-1</strain>
    </source>
</reference>
<proteinExistence type="inferred from homology"/>
<evidence type="ECO:0000255" key="1">
    <source>
        <dbReference type="HAMAP-Rule" id="MF_00072"/>
    </source>
</evidence>
<accession>P0DD97</accession>
<accession>P66022</accession>
<accession>Q99Z37</accession>
<sequence>MSLTEEIKKRRTFAIISHPDAGKTTITEQLLYFGGEIREAGTVKGKKSGTFAKSDWMDIEKQRGISVTSSVMQFDYAGKRVNILDTPGHEDFSEDTYRTLMAVDAAVMVVDSAKGIEAQTKKLFEVVKHRNIPVFTFINKLDRDGREPLELLEELEEVLGIASYPMNWPIGMGRAFEGLYDLHNKRLELYKGDERFASIEDGDQLFANNPFYEQVKEDIELLQEAGNDFSEQAILDGDLTPVFFGSALTNFGVQTFLDTFLEFAPEPHGHKTTEGNVVDPLAKDFSGFVFKIQANMDPKHRDRIAFVRIVSGEFERGMGVNLTRTGKGAKLSNVTQFMAESRENVTNAVAGDIIGVYDTGTYQVGDTLTVGKNKFEFEPLPTFTPEIFMKVSPKNVMKQKSFHKGIEQLVQEGAIQLYKNYQTGEYMLGAVGQLQFEVFKHRMEGEYNAEVVMTPMGKKTVRWISEDDLDQRMSSSRNILAKDRFDQPVFLFENDFALRWFADKYPDVTLEEKM</sequence>
<keyword id="KW-0963">Cytoplasm</keyword>
<keyword id="KW-0342">GTP-binding</keyword>
<keyword id="KW-0547">Nucleotide-binding</keyword>
<keyword id="KW-0648">Protein biosynthesis</keyword>
<dbReference type="EMBL" id="BA000034">
    <property type="protein sequence ID" value="BAC63878.1"/>
    <property type="molecule type" value="Genomic_DNA"/>
</dbReference>
<dbReference type="RefSeq" id="WP_002989155.1">
    <property type="nucleotide sequence ID" value="NC_004606.1"/>
</dbReference>
<dbReference type="SMR" id="P0DD97"/>
<dbReference type="KEGG" id="sps:SPs0783"/>
<dbReference type="HOGENOM" id="CLU_002794_2_1_9"/>
<dbReference type="GO" id="GO:0005829">
    <property type="term" value="C:cytosol"/>
    <property type="evidence" value="ECO:0007669"/>
    <property type="project" value="TreeGrafter"/>
</dbReference>
<dbReference type="GO" id="GO:0005525">
    <property type="term" value="F:GTP binding"/>
    <property type="evidence" value="ECO:0007669"/>
    <property type="project" value="UniProtKB-UniRule"/>
</dbReference>
<dbReference type="GO" id="GO:0003924">
    <property type="term" value="F:GTPase activity"/>
    <property type="evidence" value="ECO:0007669"/>
    <property type="project" value="InterPro"/>
</dbReference>
<dbReference type="GO" id="GO:0016150">
    <property type="term" value="F:translation release factor activity, codon nonspecific"/>
    <property type="evidence" value="ECO:0007669"/>
    <property type="project" value="TreeGrafter"/>
</dbReference>
<dbReference type="GO" id="GO:0016149">
    <property type="term" value="F:translation release factor activity, codon specific"/>
    <property type="evidence" value="ECO:0007669"/>
    <property type="project" value="UniProtKB-UniRule"/>
</dbReference>
<dbReference type="GO" id="GO:0006449">
    <property type="term" value="P:regulation of translational termination"/>
    <property type="evidence" value="ECO:0007669"/>
    <property type="project" value="UniProtKB-UniRule"/>
</dbReference>
<dbReference type="CDD" id="cd04169">
    <property type="entry name" value="RF3"/>
    <property type="match status" value="1"/>
</dbReference>
<dbReference type="CDD" id="cd16259">
    <property type="entry name" value="RF3_III"/>
    <property type="match status" value="1"/>
</dbReference>
<dbReference type="FunFam" id="2.40.30.10:FF:000040">
    <property type="entry name" value="Peptide chain release factor 3"/>
    <property type="match status" value="1"/>
</dbReference>
<dbReference type="FunFam" id="3.30.70.3280:FF:000001">
    <property type="entry name" value="Peptide chain release factor 3"/>
    <property type="match status" value="1"/>
</dbReference>
<dbReference type="FunFam" id="3.40.50.300:FF:000542">
    <property type="entry name" value="Peptide chain release factor 3"/>
    <property type="match status" value="1"/>
</dbReference>
<dbReference type="Gene3D" id="3.40.50.300">
    <property type="entry name" value="P-loop containing nucleotide triphosphate hydrolases"/>
    <property type="match status" value="1"/>
</dbReference>
<dbReference type="Gene3D" id="3.30.70.3280">
    <property type="entry name" value="Peptide chain release factor 3, domain III"/>
    <property type="match status" value="1"/>
</dbReference>
<dbReference type="Gene3D" id="2.40.30.10">
    <property type="entry name" value="Translation factors"/>
    <property type="match status" value="1"/>
</dbReference>
<dbReference type="HAMAP" id="MF_00072">
    <property type="entry name" value="Rel_fac_3"/>
    <property type="match status" value="1"/>
</dbReference>
<dbReference type="InterPro" id="IPR053905">
    <property type="entry name" value="EF-G-like_DII"/>
</dbReference>
<dbReference type="InterPro" id="IPR035647">
    <property type="entry name" value="EFG_III/V"/>
</dbReference>
<dbReference type="InterPro" id="IPR031157">
    <property type="entry name" value="G_TR_CS"/>
</dbReference>
<dbReference type="InterPro" id="IPR027417">
    <property type="entry name" value="P-loop_NTPase"/>
</dbReference>
<dbReference type="InterPro" id="IPR004548">
    <property type="entry name" value="PrfC"/>
</dbReference>
<dbReference type="InterPro" id="IPR032090">
    <property type="entry name" value="RF3_C"/>
</dbReference>
<dbReference type="InterPro" id="IPR038467">
    <property type="entry name" value="RF3_dom_3_sf"/>
</dbReference>
<dbReference type="InterPro" id="IPR041732">
    <property type="entry name" value="RF3_GTP-bd"/>
</dbReference>
<dbReference type="InterPro" id="IPR005225">
    <property type="entry name" value="Small_GTP-bd"/>
</dbReference>
<dbReference type="InterPro" id="IPR000795">
    <property type="entry name" value="T_Tr_GTP-bd_dom"/>
</dbReference>
<dbReference type="InterPro" id="IPR009000">
    <property type="entry name" value="Transl_B-barrel_sf"/>
</dbReference>
<dbReference type="NCBIfam" id="TIGR00503">
    <property type="entry name" value="prfC"/>
    <property type="match status" value="1"/>
</dbReference>
<dbReference type="NCBIfam" id="NF001964">
    <property type="entry name" value="PRK00741.1"/>
    <property type="match status" value="1"/>
</dbReference>
<dbReference type="NCBIfam" id="TIGR00231">
    <property type="entry name" value="small_GTP"/>
    <property type="match status" value="1"/>
</dbReference>
<dbReference type="PANTHER" id="PTHR43556">
    <property type="entry name" value="PEPTIDE CHAIN RELEASE FACTOR RF3"/>
    <property type="match status" value="1"/>
</dbReference>
<dbReference type="PANTHER" id="PTHR43556:SF2">
    <property type="entry name" value="PEPTIDE CHAIN RELEASE FACTOR RF3"/>
    <property type="match status" value="1"/>
</dbReference>
<dbReference type="Pfam" id="PF22042">
    <property type="entry name" value="EF-G_D2"/>
    <property type="match status" value="1"/>
</dbReference>
<dbReference type="Pfam" id="PF00009">
    <property type="entry name" value="GTP_EFTU"/>
    <property type="match status" value="1"/>
</dbReference>
<dbReference type="Pfam" id="PF16658">
    <property type="entry name" value="RF3_C"/>
    <property type="match status" value="1"/>
</dbReference>
<dbReference type="PRINTS" id="PR00315">
    <property type="entry name" value="ELONGATNFCT"/>
</dbReference>
<dbReference type="PRINTS" id="PR01037">
    <property type="entry name" value="TCRTETOQM"/>
</dbReference>
<dbReference type="SUPFAM" id="SSF54980">
    <property type="entry name" value="EF-G C-terminal domain-like"/>
    <property type="match status" value="1"/>
</dbReference>
<dbReference type="SUPFAM" id="SSF52540">
    <property type="entry name" value="P-loop containing nucleoside triphosphate hydrolases"/>
    <property type="match status" value="1"/>
</dbReference>
<dbReference type="SUPFAM" id="SSF50447">
    <property type="entry name" value="Translation proteins"/>
    <property type="match status" value="1"/>
</dbReference>
<dbReference type="PROSITE" id="PS00301">
    <property type="entry name" value="G_TR_1"/>
    <property type="match status" value="1"/>
</dbReference>
<dbReference type="PROSITE" id="PS51722">
    <property type="entry name" value="G_TR_2"/>
    <property type="match status" value="1"/>
</dbReference>
<organism>
    <name type="scientific">Streptococcus pyogenes serotype M3 (strain SSI-1)</name>
    <dbReference type="NCBI Taxonomy" id="193567"/>
    <lineage>
        <taxon>Bacteria</taxon>
        <taxon>Bacillati</taxon>
        <taxon>Bacillota</taxon>
        <taxon>Bacilli</taxon>
        <taxon>Lactobacillales</taxon>
        <taxon>Streptococcaceae</taxon>
        <taxon>Streptococcus</taxon>
    </lineage>
</organism>
<comment type="function">
    <text evidence="1">Increases the formation of ribosomal termination complexes and stimulates activities of RF-1 and RF-2. It binds guanine nucleotides and has strong preference for UGA stop codons. It may interact directly with the ribosome. The stimulation of RF-1 and RF-2 is significantly reduced by GTP and GDP, but not by GMP.</text>
</comment>
<comment type="subcellular location">
    <subcellularLocation>
        <location evidence="1">Cytoplasm</location>
    </subcellularLocation>
</comment>
<comment type="similarity">
    <text evidence="1">Belongs to the TRAFAC class translation factor GTPase superfamily. Classic translation factor GTPase family. PrfC subfamily.</text>
</comment>
<feature type="chain" id="PRO_0000411488" description="Peptide chain release factor 3">
    <location>
        <begin position="1"/>
        <end position="514"/>
    </location>
</feature>
<feature type="domain" description="tr-type G">
    <location>
        <begin position="8"/>
        <end position="268"/>
    </location>
</feature>
<feature type="binding site" evidence="1">
    <location>
        <begin position="17"/>
        <end position="24"/>
    </location>
    <ligand>
        <name>GTP</name>
        <dbReference type="ChEBI" id="CHEBI:37565"/>
    </ligand>
</feature>
<feature type="binding site" evidence="1">
    <location>
        <begin position="85"/>
        <end position="89"/>
    </location>
    <ligand>
        <name>GTP</name>
        <dbReference type="ChEBI" id="CHEBI:37565"/>
    </ligand>
</feature>
<feature type="binding site" evidence="1">
    <location>
        <begin position="139"/>
        <end position="142"/>
    </location>
    <ligand>
        <name>GTP</name>
        <dbReference type="ChEBI" id="CHEBI:37565"/>
    </ligand>
</feature>
<gene>
    <name evidence="1" type="primary">prfC</name>
    <name type="ordered locus">SPs0783</name>
</gene>
<name>RF3_STRPQ</name>